<dbReference type="EC" id="2.4.2.7" evidence="1"/>
<dbReference type="EMBL" id="CP000886">
    <property type="protein sequence ID" value="ABX68451.1"/>
    <property type="molecule type" value="Genomic_DNA"/>
</dbReference>
<dbReference type="RefSeq" id="WP_000127350.1">
    <property type="nucleotide sequence ID" value="NC_010102.1"/>
</dbReference>
<dbReference type="SMR" id="A9MW92"/>
<dbReference type="KEGG" id="spq:SPAB_03089"/>
<dbReference type="PATRIC" id="fig|1016998.12.peg.2915"/>
<dbReference type="HOGENOM" id="CLU_063339_3_0_6"/>
<dbReference type="BioCyc" id="SENT1016998:SPAB_RS12605-MONOMER"/>
<dbReference type="UniPathway" id="UPA00588">
    <property type="reaction ID" value="UER00646"/>
</dbReference>
<dbReference type="Proteomes" id="UP000008556">
    <property type="component" value="Chromosome"/>
</dbReference>
<dbReference type="GO" id="GO:0005829">
    <property type="term" value="C:cytosol"/>
    <property type="evidence" value="ECO:0007669"/>
    <property type="project" value="TreeGrafter"/>
</dbReference>
<dbReference type="GO" id="GO:0003999">
    <property type="term" value="F:adenine phosphoribosyltransferase activity"/>
    <property type="evidence" value="ECO:0007669"/>
    <property type="project" value="UniProtKB-UniRule"/>
</dbReference>
<dbReference type="GO" id="GO:0006168">
    <property type="term" value="P:adenine salvage"/>
    <property type="evidence" value="ECO:0007669"/>
    <property type="project" value="InterPro"/>
</dbReference>
<dbReference type="GO" id="GO:0044209">
    <property type="term" value="P:AMP salvage"/>
    <property type="evidence" value="ECO:0007669"/>
    <property type="project" value="UniProtKB-UniRule"/>
</dbReference>
<dbReference type="GO" id="GO:0006166">
    <property type="term" value="P:purine ribonucleoside salvage"/>
    <property type="evidence" value="ECO:0007669"/>
    <property type="project" value="UniProtKB-KW"/>
</dbReference>
<dbReference type="CDD" id="cd06223">
    <property type="entry name" value="PRTases_typeI"/>
    <property type="match status" value="1"/>
</dbReference>
<dbReference type="FunFam" id="3.40.50.2020:FF:000004">
    <property type="entry name" value="Adenine phosphoribosyltransferase"/>
    <property type="match status" value="1"/>
</dbReference>
<dbReference type="Gene3D" id="3.40.50.2020">
    <property type="match status" value="1"/>
</dbReference>
<dbReference type="HAMAP" id="MF_00004">
    <property type="entry name" value="Aden_phosphoribosyltr"/>
    <property type="match status" value="1"/>
</dbReference>
<dbReference type="InterPro" id="IPR005764">
    <property type="entry name" value="Ade_phspho_trans"/>
</dbReference>
<dbReference type="InterPro" id="IPR050120">
    <property type="entry name" value="Adenine_PRTase"/>
</dbReference>
<dbReference type="InterPro" id="IPR000836">
    <property type="entry name" value="PRibTrfase_dom"/>
</dbReference>
<dbReference type="InterPro" id="IPR029057">
    <property type="entry name" value="PRTase-like"/>
</dbReference>
<dbReference type="NCBIfam" id="TIGR01090">
    <property type="entry name" value="apt"/>
    <property type="match status" value="1"/>
</dbReference>
<dbReference type="NCBIfam" id="NF002632">
    <property type="entry name" value="PRK02304.1-1"/>
    <property type="match status" value="1"/>
</dbReference>
<dbReference type="NCBIfam" id="NF002634">
    <property type="entry name" value="PRK02304.1-3"/>
    <property type="match status" value="1"/>
</dbReference>
<dbReference type="NCBIfam" id="NF002636">
    <property type="entry name" value="PRK02304.1-5"/>
    <property type="match status" value="1"/>
</dbReference>
<dbReference type="PANTHER" id="PTHR11776">
    <property type="entry name" value="ADENINE PHOSPHORIBOSYLTRANSFERASE"/>
    <property type="match status" value="1"/>
</dbReference>
<dbReference type="PANTHER" id="PTHR11776:SF7">
    <property type="entry name" value="PHOSPHORIBOSYLTRANSFERASE DOMAIN-CONTAINING PROTEIN"/>
    <property type="match status" value="1"/>
</dbReference>
<dbReference type="Pfam" id="PF00156">
    <property type="entry name" value="Pribosyltran"/>
    <property type="match status" value="1"/>
</dbReference>
<dbReference type="SUPFAM" id="SSF53271">
    <property type="entry name" value="PRTase-like"/>
    <property type="match status" value="1"/>
</dbReference>
<dbReference type="PROSITE" id="PS00103">
    <property type="entry name" value="PUR_PYR_PR_TRANSFER"/>
    <property type="match status" value="1"/>
</dbReference>
<name>APT_SALPB</name>
<comment type="function">
    <text evidence="1">Catalyzes a salvage reaction resulting in the formation of AMP, that is energically less costly than de novo synthesis.</text>
</comment>
<comment type="catalytic activity">
    <reaction evidence="1">
        <text>AMP + diphosphate = 5-phospho-alpha-D-ribose 1-diphosphate + adenine</text>
        <dbReference type="Rhea" id="RHEA:16609"/>
        <dbReference type="ChEBI" id="CHEBI:16708"/>
        <dbReference type="ChEBI" id="CHEBI:33019"/>
        <dbReference type="ChEBI" id="CHEBI:58017"/>
        <dbReference type="ChEBI" id="CHEBI:456215"/>
        <dbReference type="EC" id="2.4.2.7"/>
    </reaction>
</comment>
<comment type="pathway">
    <text evidence="1">Purine metabolism; AMP biosynthesis via salvage pathway; AMP from adenine: step 1/1.</text>
</comment>
<comment type="subunit">
    <text evidence="1">Homodimer.</text>
</comment>
<comment type="subcellular location">
    <subcellularLocation>
        <location evidence="1">Cytoplasm</location>
    </subcellularLocation>
</comment>
<comment type="similarity">
    <text evidence="1">Belongs to the purine/pyrimidine phosphoribosyltransferase family.</text>
</comment>
<accession>A9MW92</accession>
<reference key="1">
    <citation type="submission" date="2007-11" db="EMBL/GenBank/DDBJ databases">
        <authorList>
            <consortium name="The Salmonella enterica serovar Paratyphi B Genome Sequencing Project"/>
            <person name="McClelland M."/>
            <person name="Sanderson E.K."/>
            <person name="Porwollik S."/>
            <person name="Spieth J."/>
            <person name="Clifton W.S."/>
            <person name="Fulton R."/>
            <person name="Cordes M."/>
            <person name="Wollam A."/>
            <person name="Shah N."/>
            <person name="Pepin K."/>
            <person name="Bhonagiri V."/>
            <person name="Nash W."/>
            <person name="Johnson M."/>
            <person name="Thiruvilangam P."/>
            <person name="Wilson R."/>
        </authorList>
    </citation>
    <scope>NUCLEOTIDE SEQUENCE [LARGE SCALE GENOMIC DNA]</scope>
    <source>
        <strain>ATCC BAA-1250 / SPB7</strain>
    </source>
</reference>
<protein>
    <recommendedName>
        <fullName evidence="1">Adenine phosphoribosyltransferase</fullName>
        <shortName evidence="1">APRT</shortName>
        <ecNumber evidence="1">2.4.2.7</ecNumber>
    </recommendedName>
</protein>
<evidence type="ECO:0000255" key="1">
    <source>
        <dbReference type="HAMAP-Rule" id="MF_00004"/>
    </source>
</evidence>
<gene>
    <name evidence="1" type="primary">apt</name>
    <name type="ordered locus">SPAB_03089</name>
</gene>
<proteinExistence type="inferred from homology"/>
<keyword id="KW-0963">Cytoplasm</keyword>
<keyword id="KW-0328">Glycosyltransferase</keyword>
<keyword id="KW-0660">Purine salvage</keyword>
<keyword id="KW-0808">Transferase</keyword>
<organism>
    <name type="scientific">Salmonella paratyphi B (strain ATCC BAA-1250 / SPB7)</name>
    <dbReference type="NCBI Taxonomy" id="1016998"/>
    <lineage>
        <taxon>Bacteria</taxon>
        <taxon>Pseudomonadati</taxon>
        <taxon>Pseudomonadota</taxon>
        <taxon>Gammaproteobacteria</taxon>
        <taxon>Enterobacterales</taxon>
        <taxon>Enterobacteriaceae</taxon>
        <taxon>Salmonella</taxon>
    </lineage>
</organism>
<sequence>MTATAQQLEFLKNSIKSIQDYPKPGILFRDVTSLLEDPKAYALSIELLVERYKNAGITKVVGTEARGFLFGAPVALGLGVGFVPVRKPRKLPRETIAETYELEYGTDQLEIHVDAIKPGDNVLVVDDLLATGGTIEATVKLIRRLGGKVTDAAFIINLFDLGGEQRLEKQGITCYSLVPFPGH</sequence>
<feature type="chain" id="PRO_1000073802" description="Adenine phosphoribosyltransferase">
    <location>
        <begin position="1"/>
        <end position="183"/>
    </location>
</feature>